<feature type="chain" id="PRO_1000143478" description="ATP synthase subunit beta">
    <location>
        <begin position="1"/>
        <end position="490"/>
    </location>
</feature>
<feature type="binding site" evidence="1">
    <location>
        <begin position="173"/>
        <end position="180"/>
    </location>
    <ligand>
        <name>ATP</name>
        <dbReference type="ChEBI" id="CHEBI:30616"/>
    </ligand>
</feature>
<sequence>MADNQTTAAEPTNGRVTRVQGSVIDVEFPVGHLPDIYNALKVTIVNTSAKEEGEAKETEITLEVEQHLGDSTVRCVALKPTDGLVRGASVSDTGAPISVPVGDVTKGHVFDVSGNILNKKPDETITVSERWPIHRNPPAFDQLESKTQMFETGIKVIDLLTPYVQGGKIGLFGGAGVGKTVLIQEMIQRVAQNHGGVSVFAGVGERTREGNDLIGEMAEAGVLEKTALVFGQMDEQPGTRLRVPLTALTMAEYFRDVQNQDVLLFIDNIFRFTQAGSEVSTLLGRMPSAVGYQPNLADEMGSLQERITSTRGHSITSLQAIYVPADDYTDPAPATTFAHLDATTELSRDIASKGIYPAVDPLSSTSRILDPRYVGQAHYDCANRVKAILQRNKELQDIIALIGIDELGEEDKTTVNRARKIEQFLGQNFYVAEKFTGRPGSYVPADETIEAFTRICDGVYDDVPEQAFSGIGGIDDLEEKWHNMQKELGA</sequence>
<organism>
    <name type="scientific">Bifidobacterium longum (strain DJO10A)</name>
    <dbReference type="NCBI Taxonomy" id="205913"/>
    <lineage>
        <taxon>Bacteria</taxon>
        <taxon>Bacillati</taxon>
        <taxon>Actinomycetota</taxon>
        <taxon>Actinomycetes</taxon>
        <taxon>Bifidobacteriales</taxon>
        <taxon>Bifidobacteriaceae</taxon>
        <taxon>Bifidobacterium</taxon>
    </lineage>
</organism>
<accession>B3DTV0</accession>
<name>ATPB_BIFLD</name>
<gene>
    <name evidence="1" type="primary">atpD</name>
    <name type="ordered locus">BLD_1123</name>
</gene>
<proteinExistence type="inferred from homology"/>
<keyword id="KW-0066">ATP synthesis</keyword>
<keyword id="KW-0067">ATP-binding</keyword>
<keyword id="KW-1003">Cell membrane</keyword>
<keyword id="KW-0139">CF(1)</keyword>
<keyword id="KW-0375">Hydrogen ion transport</keyword>
<keyword id="KW-0406">Ion transport</keyword>
<keyword id="KW-0472">Membrane</keyword>
<keyword id="KW-0547">Nucleotide-binding</keyword>
<keyword id="KW-1278">Translocase</keyword>
<keyword id="KW-0813">Transport</keyword>
<protein>
    <recommendedName>
        <fullName evidence="1">ATP synthase subunit beta</fullName>
        <ecNumber evidence="1">7.1.2.2</ecNumber>
    </recommendedName>
    <alternativeName>
        <fullName evidence="1">ATP synthase F1 sector subunit beta</fullName>
    </alternativeName>
    <alternativeName>
        <fullName evidence="1">F-ATPase subunit beta</fullName>
    </alternativeName>
</protein>
<comment type="function">
    <text evidence="1">Produces ATP from ADP in the presence of a proton gradient across the membrane. The catalytic sites are hosted primarily by the beta subunits.</text>
</comment>
<comment type="catalytic activity">
    <reaction evidence="1">
        <text>ATP + H2O + 4 H(+)(in) = ADP + phosphate + 5 H(+)(out)</text>
        <dbReference type="Rhea" id="RHEA:57720"/>
        <dbReference type="ChEBI" id="CHEBI:15377"/>
        <dbReference type="ChEBI" id="CHEBI:15378"/>
        <dbReference type="ChEBI" id="CHEBI:30616"/>
        <dbReference type="ChEBI" id="CHEBI:43474"/>
        <dbReference type="ChEBI" id="CHEBI:456216"/>
        <dbReference type="EC" id="7.1.2.2"/>
    </reaction>
</comment>
<comment type="subunit">
    <text evidence="1">F-type ATPases have 2 components, CF(1) - the catalytic core - and CF(0) - the membrane proton channel. CF(1) has five subunits: alpha(3), beta(3), gamma(1), delta(1), epsilon(1). CF(0) has three main subunits: a(1), b(2) and c(9-12). The alpha and beta chains form an alternating ring which encloses part of the gamma chain. CF(1) is attached to CF(0) by a central stalk formed by the gamma and epsilon chains, while a peripheral stalk is formed by the delta and b chains.</text>
</comment>
<comment type="subcellular location">
    <subcellularLocation>
        <location evidence="1">Cell membrane</location>
        <topology evidence="1">Peripheral membrane protein</topology>
    </subcellularLocation>
</comment>
<comment type="similarity">
    <text evidence="1">Belongs to the ATPase alpha/beta chains family.</text>
</comment>
<reference key="1">
    <citation type="journal article" date="2008" name="BMC Genomics">
        <title>Comparative genomic analysis of the gut bacterium Bifidobacterium longum reveals loci susceptible to deletion during pure culture growth.</title>
        <authorList>
            <person name="Lee J.H."/>
            <person name="Karamychev V.N."/>
            <person name="Kozyavkin S.A."/>
            <person name="Mills D."/>
            <person name="Pavlov A.R."/>
            <person name="Pavlova N.V."/>
            <person name="Polouchine N.N."/>
            <person name="Richardson P.M."/>
            <person name="Shakhova V.V."/>
            <person name="Slesarev A.I."/>
            <person name="Weimer B."/>
            <person name="O'Sullivan D.J."/>
        </authorList>
    </citation>
    <scope>NUCLEOTIDE SEQUENCE [LARGE SCALE GENOMIC DNA]</scope>
    <source>
        <strain>DJO10A</strain>
    </source>
</reference>
<dbReference type="EC" id="7.1.2.2" evidence="1"/>
<dbReference type="EMBL" id="CP000605">
    <property type="protein sequence ID" value="ACD98569.1"/>
    <property type="molecule type" value="Genomic_DNA"/>
</dbReference>
<dbReference type="RefSeq" id="WP_007051478.1">
    <property type="nucleotide sequence ID" value="NZ_AABM02000027.1"/>
</dbReference>
<dbReference type="SMR" id="B3DTV0"/>
<dbReference type="GeneID" id="69577499"/>
<dbReference type="KEGG" id="blj:BLD_1123"/>
<dbReference type="HOGENOM" id="CLU_022398_0_2_11"/>
<dbReference type="Proteomes" id="UP000002419">
    <property type="component" value="Chromosome"/>
</dbReference>
<dbReference type="GO" id="GO:0005886">
    <property type="term" value="C:plasma membrane"/>
    <property type="evidence" value="ECO:0007669"/>
    <property type="project" value="UniProtKB-SubCell"/>
</dbReference>
<dbReference type="GO" id="GO:0045259">
    <property type="term" value="C:proton-transporting ATP synthase complex"/>
    <property type="evidence" value="ECO:0007669"/>
    <property type="project" value="UniProtKB-KW"/>
</dbReference>
<dbReference type="GO" id="GO:0005524">
    <property type="term" value="F:ATP binding"/>
    <property type="evidence" value="ECO:0007669"/>
    <property type="project" value="UniProtKB-UniRule"/>
</dbReference>
<dbReference type="GO" id="GO:0016887">
    <property type="term" value="F:ATP hydrolysis activity"/>
    <property type="evidence" value="ECO:0007669"/>
    <property type="project" value="InterPro"/>
</dbReference>
<dbReference type="GO" id="GO:0046933">
    <property type="term" value="F:proton-transporting ATP synthase activity, rotational mechanism"/>
    <property type="evidence" value="ECO:0007669"/>
    <property type="project" value="UniProtKB-UniRule"/>
</dbReference>
<dbReference type="CDD" id="cd18110">
    <property type="entry name" value="ATP-synt_F1_beta_C"/>
    <property type="match status" value="1"/>
</dbReference>
<dbReference type="CDD" id="cd18115">
    <property type="entry name" value="ATP-synt_F1_beta_N"/>
    <property type="match status" value="1"/>
</dbReference>
<dbReference type="CDD" id="cd01133">
    <property type="entry name" value="F1-ATPase_beta_CD"/>
    <property type="match status" value="1"/>
</dbReference>
<dbReference type="FunFam" id="1.10.1140.10:FF:000005">
    <property type="entry name" value="ATP synthase subunit beta"/>
    <property type="match status" value="1"/>
</dbReference>
<dbReference type="FunFam" id="2.40.10.170:FF:000005">
    <property type="entry name" value="ATP synthase subunit beta"/>
    <property type="match status" value="1"/>
</dbReference>
<dbReference type="FunFam" id="3.40.50.300:FF:000004">
    <property type="entry name" value="ATP synthase subunit beta"/>
    <property type="match status" value="1"/>
</dbReference>
<dbReference type="Gene3D" id="2.40.10.170">
    <property type="match status" value="1"/>
</dbReference>
<dbReference type="Gene3D" id="1.10.1140.10">
    <property type="entry name" value="Bovine Mitochondrial F1-atpase, Atp Synthase Beta Chain, Chain D, domain 3"/>
    <property type="match status" value="1"/>
</dbReference>
<dbReference type="Gene3D" id="3.40.50.300">
    <property type="entry name" value="P-loop containing nucleotide triphosphate hydrolases"/>
    <property type="match status" value="1"/>
</dbReference>
<dbReference type="HAMAP" id="MF_01347">
    <property type="entry name" value="ATP_synth_beta_bact"/>
    <property type="match status" value="1"/>
</dbReference>
<dbReference type="InterPro" id="IPR003593">
    <property type="entry name" value="AAA+_ATPase"/>
</dbReference>
<dbReference type="InterPro" id="IPR055190">
    <property type="entry name" value="ATP-synt_VA_C"/>
</dbReference>
<dbReference type="InterPro" id="IPR005722">
    <property type="entry name" value="ATP_synth_F1_bsu"/>
</dbReference>
<dbReference type="InterPro" id="IPR050053">
    <property type="entry name" value="ATPase_alpha/beta_chains"/>
</dbReference>
<dbReference type="InterPro" id="IPR004100">
    <property type="entry name" value="ATPase_F1/V1/A1_a/bsu_N"/>
</dbReference>
<dbReference type="InterPro" id="IPR036121">
    <property type="entry name" value="ATPase_F1/V1/A1_a/bsu_N_sf"/>
</dbReference>
<dbReference type="InterPro" id="IPR000194">
    <property type="entry name" value="ATPase_F1/V1/A1_a/bsu_nucl-bd"/>
</dbReference>
<dbReference type="InterPro" id="IPR024034">
    <property type="entry name" value="ATPase_F1/V1_b/a_C"/>
</dbReference>
<dbReference type="InterPro" id="IPR027417">
    <property type="entry name" value="P-loop_NTPase"/>
</dbReference>
<dbReference type="NCBIfam" id="TIGR01039">
    <property type="entry name" value="atpD"/>
    <property type="match status" value="1"/>
</dbReference>
<dbReference type="PANTHER" id="PTHR15184">
    <property type="entry name" value="ATP SYNTHASE"/>
    <property type="match status" value="1"/>
</dbReference>
<dbReference type="PANTHER" id="PTHR15184:SF71">
    <property type="entry name" value="ATP SYNTHASE SUBUNIT BETA, MITOCHONDRIAL"/>
    <property type="match status" value="1"/>
</dbReference>
<dbReference type="Pfam" id="PF00006">
    <property type="entry name" value="ATP-synt_ab"/>
    <property type="match status" value="1"/>
</dbReference>
<dbReference type="Pfam" id="PF02874">
    <property type="entry name" value="ATP-synt_ab_N"/>
    <property type="match status" value="1"/>
</dbReference>
<dbReference type="Pfam" id="PF22919">
    <property type="entry name" value="ATP-synt_VA_C"/>
    <property type="match status" value="1"/>
</dbReference>
<dbReference type="SMART" id="SM00382">
    <property type="entry name" value="AAA"/>
    <property type="match status" value="1"/>
</dbReference>
<dbReference type="SUPFAM" id="SSF47917">
    <property type="entry name" value="C-terminal domain of alpha and beta subunits of F1 ATP synthase"/>
    <property type="match status" value="1"/>
</dbReference>
<dbReference type="SUPFAM" id="SSF50615">
    <property type="entry name" value="N-terminal domain of alpha and beta subunits of F1 ATP synthase"/>
    <property type="match status" value="1"/>
</dbReference>
<dbReference type="SUPFAM" id="SSF52540">
    <property type="entry name" value="P-loop containing nucleoside triphosphate hydrolases"/>
    <property type="match status" value="1"/>
</dbReference>
<evidence type="ECO:0000255" key="1">
    <source>
        <dbReference type="HAMAP-Rule" id="MF_01347"/>
    </source>
</evidence>